<keyword id="KW-0010">Activator</keyword>
<keyword id="KW-0539">Nucleus</keyword>
<keyword id="KW-1185">Reference proteome</keyword>
<keyword id="KW-0804">Transcription</keyword>
<keyword id="KW-0805">Transcription regulation</keyword>
<evidence type="ECO:0000250" key="1"/>
<evidence type="ECO:0000250" key="2">
    <source>
        <dbReference type="UniProtKB" id="Q9P086"/>
    </source>
</evidence>
<evidence type="ECO:0000305" key="3"/>
<organism>
    <name type="scientific">Aedes aegypti</name>
    <name type="common">Yellowfever mosquito</name>
    <name type="synonym">Culex aegypti</name>
    <dbReference type="NCBI Taxonomy" id="7159"/>
    <lineage>
        <taxon>Eukaryota</taxon>
        <taxon>Metazoa</taxon>
        <taxon>Ecdysozoa</taxon>
        <taxon>Arthropoda</taxon>
        <taxon>Hexapoda</taxon>
        <taxon>Insecta</taxon>
        <taxon>Pterygota</taxon>
        <taxon>Neoptera</taxon>
        <taxon>Endopterygota</taxon>
        <taxon>Diptera</taxon>
        <taxon>Nematocera</taxon>
        <taxon>Culicoidea</taxon>
        <taxon>Culicidae</taxon>
        <taxon>Culicinae</taxon>
        <taxon>Aedini</taxon>
        <taxon>Aedes</taxon>
        <taxon>Stegomyia</taxon>
    </lineage>
</organism>
<protein>
    <recommendedName>
        <fullName>Mediator of RNA polymerase II transcription subunit 11</fullName>
    </recommendedName>
    <alternativeName>
        <fullName>Mediator complex subunit 11</fullName>
    </alternativeName>
</protein>
<comment type="function">
    <text evidence="2">Component of the Mediator complex, a coactivator involved in the regulated transcription of nearly all RNA polymerase II-dependent genes. Mediator functions as a bridge to convey information from gene-specific regulatory proteins to the basal RNA polymerase II transcription machinery. Mediator is recruited to promoters by direct interactions with regulatory proteins and serves as a scaffold for theQ9P086 assembly of a functional pre-initiation complex with RNA polymerase II and the general transcription factors (By similarity).</text>
</comment>
<comment type="subunit">
    <text evidence="1">Component of the Mediator complex.</text>
</comment>
<comment type="subcellular location">
    <subcellularLocation>
        <location evidence="3">Nucleus</location>
    </subcellularLocation>
</comment>
<comment type="similarity">
    <text evidence="3">Belongs to the Mediator complex subunit 11 family.</text>
</comment>
<proteinExistence type="inferred from homology"/>
<feature type="chain" id="PRO_0000304313" description="Mediator of RNA polymerase II transcription subunit 11">
    <location>
        <begin position="1"/>
        <end position="132"/>
    </location>
</feature>
<sequence>MTAIDKIQVLDSIEKELLLCLQSAGQALLELSKEKTSQKATETHTNQFLKSLNIVESKLSEQINYLTQVSTGQPHEGSGYAAAKVLQMAWHRIQHVKSRIKELEECKIKYVQATNRLQTQRTGPNPGSGGVM</sequence>
<reference key="1">
    <citation type="journal article" date="2007" name="Science">
        <title>Genome sequence of Aedes aegypti, a major arbovirus vector.</title>
        <authorList>
            <person name="Nene V."/>
            <person name="Wortman J.R."/>
            <person name="Lawson D."/>
            <person name="Haas B.J."/>
            <person name="Kodira C.D."/>
            <person name="Tu Z.J."/>
            <person name="Loftus B.J."/>
            <person name="Xi Z."/>
            <person name="Megy K."/>
            <person name="Grabherr M."/>
            <person name="Ren Q."/>
            <person name="Zdobnov E.M."/>
            <person name="Lobo N.F."/>
            <person name="Campbell K.S."/>
            <person name="Brown S.E."/>
            <person name="Bonaldo M.F."/>
            <person name="Zhu J."/>
            <person name="Sinkins S.P."/>
            <person name="Hogenkamp D.G."/>
            <person name="Amedeo P."/>
            <person name="Arensburger P."/>
            <person name="Atkinson P.W."/>
            <person name="Bidwell S.L."/>
            <person name="Biedler J."/>
            <person name="Birney E."/>
            <person name="Bruggner R.V."/>
            <person name="Costas J."/>
            <person name="Coy M.R."/>
            <person name="Crabtree J."/>
            <person name="Crawford M."/>
            <person name="DeBruyn B."/>
            <person name="DeCaprio D."/>
            <person name="Eiglmeier K."/>
            <person name="Eisenstadt E."/>
            <person name="El-Dorry H."/>
            <person name="Gelbart W.M."/>
            <person name="Gomes S.L."/>
            <person name="Hammond M."/>
            <person name="Hannick L.I."/>
            <person name="Hogan J.R."/>
            <person name="Holmes M.H."/>
            <person name="Jaffe D."/>
            <person name="Johnston S.J."/>
            <person name="Kennedy R.C."/>
            <person name="Koo H."/>
            <person name="Kravitz S."/>
            <person name="Kriventseva E.V."/>
            <person name="Kulp D."/>
            <person name="Labutti K."/>
            <person name="Lee E."/>
            <person name="Li S."/>
            <person name="Lovin D.D."/>
            <person name="Mao C."/>
            <person name="Mauceli E."/>
            <person name="Menck C.F."/>
            <person name="Miller J.R."/>
            <person name="Montgomery P."/>
            <person name="Mori A."/>
            <person name="Nascimento A.L."/>
            <person name="Naveira H.F."/>
            <person name="Nusbaum C."/>
            <person name="O'Leary S.B."/>
            <person name="Orvis J."/>
            <person name="Pertea M."/>
            <person name="Quesneville H."/>
            <person name="Reidenbach K.R."/>
            <person name="Rogers Y.-H.C."/>
            <person name="Roth C.W."/>
            <person name="Schneider J.R."/>
            <person name="Schatz M."/>
            <person name="Shumway M."/>
            <person name="Stanke M."/>
            <person name="Stinson E.O."/>
            <person name="Tubio J.M.C."/>
            <person name="Vanzee J.P."/>
            <person name="Verjovski-Almeida S."/>
            <person name="Werner D."/>
            <person name="White O.R."/>
            <person name="Wyder S."/>
            <person name="Zeng Q."/>
            <person name="Zhao Q."/>
            <person name="Zhao Y."/>
            <person name="Hill C.A."/>
            <person name="Raikhel A.S."/>
            <person name="Soares M.B."/>
            <person name="Knudson D.L."/>
            <person name="Lee N.H."/>
            <person name="Galagan J."/>
            <person name="Salzberg S.L."/>
            <person name="Paulsen I.T."/>
            <person name="Dimopoulos G."/>
            <person name="Collins F.H."/>
            <person name="Bruce B."/>
            <person name="Fraser-Liggett C.M."/>
            <person name="Severson D.W."/>
        </authorList>
    </citation>
    <scope>NUCLEOTIDE SEQUENCE [LARGE SCALE GENOMIC DNA]</scope>
    <source>
        <strain>LVPib12</strain>
    </source>
</reference>
<name>MED11_AEDAE</name>
<dbReference type="EMBL" id="CH477199">
    <property type="protein sequence ID" value="EAT48237.1"/>
    <property type="molecule type" value="Genomic_DNA"/>
</dbReference>
<dbReference type="SMR" id="Q17NH9"/>
<dbReference type="FunCoup" id="Q17NH9">
    <property type="interactions" value="520"/>
</dbReference>
<dbReference type="STRING" id="7159.Q17NH9"/>
<dbReference type="PaxDb" id="7159-AAEL000720-PA"/>
<dbReference type="EnsemblMetazoa" id="AAEL000720-RA">
    <property type="protein sequence ID" value="AAEL000720-PA"/>
    <property type="gene ID" value="AAEL000720"/>
</dbReference>
<dbReference type="GeneID" id="5565908"/>
<dbReference type="KEGG" id="aag:5565908"/>
<dbReference type="CTD" id="400569"/>
<dbReference type="VEuPathDB" id="VectorBase:AAEL000720"/>
<dbReference type="eggNOG" id="KOG4057">
    <property type="taxonomic scope" value="Eukaryota"/>
</dbReference>
<dbReference type="HOGENOM" id="CLU_123010_1_0_1"/>
<dbReference type="InParanoid" id="Q17NH9"/>
<dbReference type="OMA" id="WHRIQHV"/>
<dbReference type="OrthoDB" id="5418434at2759"/>
<dbReference type="PhylomeDB" id="Q17NH9"/>
<dbReference type="Proteomes" id="UP000008820">
    <property type="component" value="Chromosome 2"/>
</dbReference>
<dbReference type="Proteomes" id="UP000682892">
    <property type="component" value="Chromosome 2"/>
</dbReference>
<dbReference type="GO" id="GO:0016592">
    <property type="term" value="C:mediator complex"/>
    <property type="evidence" value="ECO:0007669"/>
    <property type="project" value="InterPro"/>
</dbReference>
<dbReference type="GO" id="GO:0003712">
    <property type="term" value="F:transcription coregulator activity"/>
    <property type="evidence" value="ECO:0007669"/>
    <property type="project" value="InterPro"/>
</dbReference>
<dbReference type="GO" id="GO:0006357">
    <property type="term" value="P:regulation of transcription by RNA polymerase II"/>
    <property type="evidence" value="ECO:0007669"/>
    <property type="project" value="InterPro"/>
</dbReference>
<dbReference type="FunFam" id="1.10.287.3490:FF:000001">
    <property type="entry name" value="Mediator of RNA polymerase II transcription subunit 11"/>
    <property type="match status" value="1"/>
</dbReference>
<dbReference type="Gene3D" id="1.10.287.3490">
    <property type="match status" value="1"/>
</dbReference>
<dbReference type="InterPro" id="IPR019404">
    <property type="entry name" value="Mediator_Med11"/>
</dbReference>
<dbReference type="PANTHER" id="PTHR22890">
    <property type="entry name" value="MEDIATOR OF RNA POLYMERASE II TRANSCRIPTION SUBUNIT 11"/>
    <property type="match status" value="1"/>
</dbReference>
<dbReference type="Pfam" id="PF10280">
    <property type="entry name" value="Med11"/>
    <property type="match status" value="1"/>
</dbReference>
<accession>Q17NH9</accession>
<gene>
    <name type="primary">MED11</name>
    <name type="ORF">AAEL000720</name>
</gene>